<proteinExistence type="inferred from homology"/>
<protein>
    <recommendedName>
        <fullName evidence="1">Probable GTP-binding protein EngB</fullName>
    </recommendedName>
</protein>
<reference key="1">
    <citation type="submission" date="2009-03" db="EMBL/GenBank/DDBJ databases">
        <title>Complete genome sequence of Edwardsiella ictaluri 93-146.</title>
        <authorList>
            <person name="Williams M.L."/>
            <person name="Gillaspy A.F."/>
            <person name="Dyer D.W."/>
            <person name="Thune R.L."/>
            <person name="Waldbieser G.C."/>
            <person name="Schuster S.C."/>
            <person name="Gipson J."/>
            <person name="Zaitshik J."/>
            <person name="Landry C."/>
            <person name="Lawrence M.L."/>
        </authorList>
    </citation>
    <scope>NUCLEOTIDE SEQUENCE [LARGE SCALE GENOMIC DNA]</scope>
    <source>
        <strain>93-146</strain>
    </source>
</reference>
<gene>
    <name evidence="1" type="primary">engB</name>
    <name type="ordered locus">NT01EI_3871</name>
</gene>
<sequence length="217" mass="24311">MARQTYNYHVTHFVTSAPDIRHLPEDTGIEVAFAGRSNAGKSSALNTLTNQKSLARTSKTPGRTQLINLFEVEDGIRLVDLPGYGYAEVPEEMKRKWQQALGEYLQKRQCLKGLVVLMDIRHPLKDLDQQMIAWAVEVGLPVLLLLTKADKLASGARKAQLNMVREAVLPFMGDIQVDAFSSLKKFGVDKLRDKLDTWFSEITPQQADKDDDPSIGE</sequence>
<name>ENGB_EDWI9</name>
<keyword id="KW-0131">Cell cycle</keyword>
<keyword id="KW-0132">Cell division</keyword>
<keyword id="KW-0342">GTP-binding</keyword>
<keyword id="KW-0460">Magnesium</keyword>
<keyword id="KW-0479">Metal-binding</keyword>
<keyword id="KW-0547">Nucleotide-binding</keyword>
<keyword id="KW-0717">Septation</keyword>
<feature type="chain" id="PRO_1000205125" description="Probable GTP-binding protein EngB">
    <location>
        <begin position="1"/>
        <end position="217"/>
    </location>
</feature>
<feature type="domain" description="EngB-type G" evidence="1">
    <location>
        <begin position="27"/>
        <end position="201"/>
    </location>
</feature>
<feature type="binding site" evidence="1">
    <location>
        <begin position="35"/>
        <end position="42"/>
    </location>
    <ligand>
        <name>GTP</name>
        <dbReference type="ChEBI" id="CHEBI:37565"/>
    </ligand>
</feature>
<feature type="binding site" evidence="1">
    <location>
        <position position="42"/>
    </location>
    <ligand>
        <name>Mg(2+)</name>
        <dbReference type="ChEBI" id="CHEBI:18420"/>
    </ligand>
</feature>
<feature type="binding site" evidence="1">
    <location>
        <begin position="62"/>
        <end position="66"/>
    </location>
    <ligand>
        <name>GTP</name>
        <dbReference type="ChEBI" id="CHEBI:37565"/>
    </ligand>
</feature>
<feature type="binding site" evidence="1">
    <location>
        <position position="64"/>
    </location>
    <ligand>
        <name>Mg(2+)</name>
        <dbReference type="ChEBI" id="CHEBI:18420"/>
    </ligand>
</feature>
<feature type="binding site" evidence="1">
    <location>
        <begin position="80"/>
        <end position="83"/>
    </location>
    <ligand>
        <name>GTP</name>
        <dbReference type="ChEBI" id="CHEBI:37565"/>
    </ligand>
</feature>
<feature type="binding site" evidence="1">
    <location>
        <begin position="147"/>
        <end position="150"/>
    </location>
    <ligand>
        <name>GTP</name>
        <dbReference type="ChEBI" id="CHEBI:37565"/>
    </ligand>
</feature>
<feature type="binding site" evidence="1">
    <location>
        <begin position="180"/>
        <end position="182"/>
    </location>
    <ligand>
        <name>GTP</name>
        <dbReference type="ChEBI" id="CHEBI:37565"/>
    </ligand>
</feature>
<organism>
    <name type="scientific">Edwardsiella ictaluri (strain 93-146)</name>
    <dbReference type="NCBI Taxonomy" id="634503"/>
    <lineage>
        <taxon>Bacteria</taxon>
        <taxon>Pseudomonadati</taxon>
        <taxon>Pseudomonadota</taxon>
        <taxon>Gammaproteobacteria</taxon>
        <taxon>Enterobacterales</taxon>
        <taxon>Hafniaceae</taxon>
        <taxon>Edwardsiella</taxon>
    </lineage>
</organism>
<evidence type="ECO:0000255" key="1">
    <source>
        <dbReference type="HAMAP-Rule" id="MF_00321"/>
    </source>
</evidence>
<dbReference type="EMBL" id="CP001600">
    <property type="protein sequence ID" value="ACR70990.1"/>
    <property type="molecule type" value="Genomic_DNA"/>
</dbReference>
<dbReference type="SMR" id="C5BC84"/>
<dbReference type="STRING" id="67780.B6E78_10895"/>
<dbReference type="KEGG" id="eic:NT01EI_3871"/>
<dbReference type="PATRIC" id="fig|634503.3.peg.3452"/>
<dbReference type="HOGENOM" id="CLU_033732_1_0_6"/>
<dbReference type="OrthoDB" id="9804921at2"/>
<dbReference type="Proteomes" id="UP000001485">
    <property type="component" value="Chromosome"/>
</dbReference>
<dbReference type="GO" id="GO:0005829">
    <property type="term" value="C:cytosol"/>
    <property type="evidence" value="ECO:0007669"/>
    <property type="project" value="TreeGrafter"/>
</dbReference>
<dbReference type="GO" id="GO:0005525">
    <property type="term" value="F:GTP binding"/>
    <property type="evidence" value="ECO:0007669"/>
    <property type="project" value="UniProtKB-UniRule"/>
</dbReference>
<dbReference type="GO" id="GO:0046872">
    <property type="term" value="F:metal ion binding"/>
    <property type="evidence" value="ECO:0007669"/>
    <property type="project" value="UniProtKB-KW"/>
</dbReference>
<dbReference type="GO" id="GO:0000917">
    <property type="term" value="P:division septum assembly"/>
    <property type="evidence" value="ECO:0007669"/>
    <property type="project" value="UniProtKB-KW"/>
</dbReference>
<dbReference type="CDD" id="cd01876">
    <property type="entry name" value="YihA_EngB"/>
    <property type="match status" value="1"/>
</dbReference>
<dbReference type="FunFam" id="3.40.50.300:FF:000098">
    <property type="entry name" value="Probable GTP-binding protein EngB"/>
    <property type="match status" value="1"/>
</dbReference>
<dbReference type="Gene3D" id="3.40.50.300">
    <property type="entry name" value="P-loop containing nucleotide triphosphate hydrolases"/>
    <property type="match status" value="1"/>
</dbReference>
<dbReference type="HAMAP" id="MF_00321">
    <property type="entry name" value="GTPase_EngB"/>
    <property type="match status" value="1"/>
</dbReference>
<dbReference type="InterPro" id="IPR030393">
    <property type="entry name" value="G_ENGB_dom"/>
</dbReference>
<dbReference type="InterPro" id="IPR006073">
    <property type="entry name" value="GTP-bd"/>
</dbReference>
<dbReference type="InterPro" id="IPR019987">
    <property type="entry name" value="GTP-bd_ribosome_bio_YsxC"/>
</dbReference>
<dbReference type="InterPro" id="IPR027417">
    <property type="entry name" value="P-loop_NTPase"/>
</dbReference>
<dbReference type="NCBIfam" id="TIGR03598">
    <property type="entry name" value="GTPase_YsxC"/>
    <property type="match status" value="1"/>
</dbReference>
<dbReference type="PANTHER" id="PTHR11649:SF13">
    <property type="entry name" value="ENGB-TYPE G DOMAIN-CONTAINING PROTEIN"/>
    <property type="match status" value="1"/>
</dbReference>
<dbReference type="PANTHER" id="PTHR11649">
    <property type="entry name" value="MSS1/TRME-RELATED GTP-BINDING PROTEIN"/>
    <property type="match status" value="1"/>
</dbReference>
<dbReference type="Pfam" id="PF01926">
    <property type="entry name" value="MMR_HSR1"/>
    <property type="match status" value="1"/>
</dbReference>
<dbReference type="SUPFAM" id="SSF52540">
    <property type="entry name" value="P-loop containing nucleoside triphosphate hydrolases"/>
    <property type="match status" value="1"/>
</dbReference>
<dbReference type="PROSITE" id="PS51706">
    <property type="entry name" value="G_ENGB"/>
    <property type="match status" value="1"/>
</dbReference>
<comment type="function">
    <text evidence="1">Necessary for normal cell division and for the maintenance of normal septation.</text>
</comment>
<comment type="cofactor">
    <cofactor evidence="1">
        <name>Mg(2+)</name>
        <dbReference type="ChEBI" id="CHEBI:18420"/>
    </cofactor>
</comment>
<comment type="similarity">
    <text evidence="1">Belongs to the TRAFAC class TrmE-Era-EngA-EngB-Septin-like GTPase superfamily. EngB GTPase family.</text>
</comment>
<accession>C5BC84</accession>